<name>PTPRE_HUMAN</name>
<evidence type="ECO:0000250" key="1"/>
<evidence type="ECO:0000255" key="2"/>
<evidence type="ECO:0000255" key="3">
    <source>
        <dbReference type="PROSITE-ProRule" id="PRU00160"/>
    </source>
</evidence>
<evidence type="ECO:0000255" key="4">
    <source>
        <dbReference type="PROSITE-ProRule" id="PRU10044"/>
    </source>
</evidence>
<evidence type="ECO:0000269" key="5">
    <source>
    </source>
</evidence>
<evidence type="ECO:0000269" key="6">
    <source>
    </source>
</evidence>
<evidence type="ECO:0000269" key="7">
    <source>
    </source>
</evidence>
<evidence type="ECO:0000303" key="8">
    <source>
    </source>
</evidence>
<evidence type="ECO:0000303" key="9">
    <source>
    </source>
</evidence>
<evidence type="ECO:0000305" key="10"/>
<evidence type="ECO:0007744" key="11">
    <source>
    </source>
</evidence>
<evidence type="ECO:0007829" key="12">
    <source>
        <dbReference type="PDB" id="2JJD"/>
    </source>
</evidence>
<evidence type="ECO:0007829" key="13">
    <source>
        <dbReference type="PDB" id="6D3F"/>
    </source>
</evidence>
<evidence type="ECO:0007829" key="14">
    <source>
        <dbReference type="PDB" id="6D4D"/>
    </source>
</evidence>
<evidence type="ECO:0007829" key="15">
    <source>
        <dbReference type="PDB" id="6D4F"/>
    </source>
</evidence>
<reference key="1">
    <citation type="journal article" date="1990" name="EMBO J.">
        <title>Structural diversity and evolution of human receptor-like protein tyrosine phosphatases.</title>
        <authorList>
            <person name="Krueger N.X."/>
            <person name="Streuli M."/>
            <person name="Saito H."/>
        </authorList>
    </citation>
    <scope>NUCLEOTIDE SEQUENCE [MRNA] (ISOFORM 1)</scope>
    <source>
        <tissue>Placenta</tissue>
    </source>
</reference>
<reference key="2">
    <citation type="journal article" date="2002" name="Scand. J. Immunol.">
        <title>Expression of human protein tyrosine phosphatase epsilon in leucocytes: a potential ERK pathway-regulating phosphatase.</title>
        <authorList>
            <person name="Wabakken T.K."/>
            <person name="Hauge H."/>
            <person name="Finne E.F."/>
            <person name="Wiedlocha A."/>
            <person name="Aasheim H.-C."/>
        </authorList>
    </citation>
    <scope>NUCLEOTIDE SEQUENCE [MRNA] (ISOFORM 2)</scope>
</reference>
<reference key="3">
    <citation type="journal article" date="2004" name="Nat. Genet.">
        <title>Complete sequencing and characterization of 21,243 full-length human cDNAs.</title>
        <authorList>
            <person name="Ota T."/>
            <person name="Suzuki Y."/>
            <person name="Nishikawa T."/>
            <person name="Otsuki T."/>
            <person name="Sugiyama T."/>
            <person name="Irie R."/>
            <person name="Wakamatsu A."/>
            <person name="Hayashi K."/>
            <person name="Sato H."/>
            <person name="Nagai K."/>
            <person name="Kimura K."/>
            <person name="Makita H."/>
            <person name="Sekine M."/>
            <person name="Obayashi M."/>
            <person name="Nishi T."/>
            <person name="Shibahara T."/>
            <person name="Tanaka T."/>
            <person name="Ishii S."/>
            <person name="Yamamoto J."/>
            <person name="Saito K."/>
            <person name="Kawai Y."/>
            <person name="Isono Y."/>
            <person name="Nakamura Y."/>
            <person name="Nagahari K."/>
            <person name="Murakami K."/>
            <person name="Yasuda T."/>
            <person name="Iwayanagi T."/>
            <person name="Wagatsuma M."/>
            <person name="Shiratori A."/>
            <person name="Sudo H."/>
            <person name="Hosoiri T."/>
            <person name="Kaku Y."/>
            <person name="Kodaira H."/>
            <person name="Kondo H."/>
            <person name="Sugawara M."/>
            <person name="Takahashi M."/>
            <person name="Kanda K."/>
            <person name="Yokoi T."/>
            <person name="Furuya T."/>
            <person name="Kikkawa E."/>
            <person name="Omura Y."/>
            <person name="Abe K."/>
            <person name="Kamihara K."/>
            <person name="Katsuta N."/>
            <person name="Sato K."/>
            <person name="Tanikawa M."/>
            <person name="Yamazaki M."/>
            <person name="Ninomiya K."/>
            <person name="Ishibashi T."/>
            <person name="Yamashita H."/>
            <person name="Murakawa K."/>
            <person name="Fujimori K."/>
            <person name="Tanai H."/>
            <person name="Kimata M."/>
            <person name="Watanabe M."/>
            <person name="Hiraoka S."/>
            <person name="Chiba Y."/>
            <person name="Ishida S."/>
            <person name="Ono Y."/>
            <person name="Takiguchi S."/>
            <person name="Watanabe S."/>
            <person name="Yosida M."/>
            <person name="Hotuta T."/>
            <person name="Kusano J."/>
            <person name="Kanehori K."/>
            <person name="Takahashi-Fujii A."/>
            <person name="Hara H."/>
            <person name="Tanase T.-O."/>
            <person name="Nomura Y."/>
            <person name="Togiya S."/>
            <person name="Komai F."/>
            <person name="Hara R."/>
            <person name="Takeuchi K."/>
            <person name="Arita M."/>
            <person name="Imose N."/>
            <person name="Musashino K."/>
            <person name="Yuuki H."/>
            <person name="Oshima A."/>
            <person name="Sasaki N."/>
            <person name="Aotsuka S."/>
            <person name="Yoshikawa Y."/>
            <person name="Matsunawa H."/>
            <person name="Ichihara T."/>
            <person name="Shiohata N."/>
            <person name="Sano S."/>
            <person name="Moriya S."/>
            <person name="Momiyama H."/>
            <person name="Satoh N."/>
            <person name="Takami S."/>
            <person name="Terashima Y."/>
            <person name="Suzuki O."/>
            <person name="Nakagawa S."/>
            <person name="Senoh A."/>
            <person name="Mizoguchi H."/>
            <person name="Goto Y."/>
            <person name="Shimizu F."/>
            <person name="Wakebe H."/>
            <person name="Hishigaki H."/>
            <person name="Watanabe T."/>
            <person name="Sugiyama A."/>
            <person name="Takemoto M."/>
            <person name="Kawakami B."/>
            <person name="Yamazaki M."/>
            <person name="Watanabe K."/>
            <person name="Kumagai A."/>
            <person name="Itakura S."/>
            <person name="Fukuzumi Y."/>
            <person name="Fujimori Y."/>
            <person name="Komiyama M."/>
            <person name="Tashiro H."/>
            <person name="Tanigami A."/>
            <person name="Fujiwara T."/>
            <person name="Ono T."/>
            <person name="Yamada K."/>
            <person name="Fujii Y."/>
            <person name="Ozaki K."/>
            <person name="Hirao M."/>
            <person name="Ohmori Y."/>
            <person name="Kawabata A."/>
            <person name="Hikiji T."/>
            <person name="Kobatake N."/>
            <person name="Inagaki H."/>
            <person name="Ikema Y."/>
            <person name="Okamoto S."/>
            <person name="Okitani R."/>
            <person name="Kawakami T."/>
            <person name="Noguchi S."/>
            <person name="Itoh T."/>
            <person name="Shigeta K."/>
            <person name="Senba T."/>
            <person name="Matsumura K."/>
            <person name="Nakajima Y."/>
            <person name="Mizuno T."/>
            <person name="Morinaga M."/>
            <person name="Sasaki M."/>
            <person name="Togashi T."/>
            <person name="Oyama M."/>
            <person name="Hata H."/>
            <person name="Watanabe M."/>
            <person name="Komatsu T."/>
            <person name="Mizushima-Sugano J."/>
            <person name="Satoh T."/>
            <person name="Shirai Y."/>
            <person name="Takahashi Y."/>
            <person name="Nakagawa K."/>
            <person name="Okumura K."/>
            <person name="Nagase T."/>
            <person name="Nomura N."/>
            <person name="Kikuchi H."/>
            <person name="Masuho Y."/>
            <person name="Yamashita R."/>
            <person name="Nakai K."/>
            <person name="Yada T."/>
            <person name="Nakamura Y."/>
            <person name="Ohara O."/>
            <person name="Isogai T."/>
            <person name="Sugano S."/>
        </authorList>
    </citation>
    <scope>NUCLEOTIDE SEQUENCE [LARGE SCALE MRNA] (ISOFORM 1)</scope>
</reference>
<reference key="4">
    <citation type="journal article" date="2004" name="Nature">
        <title>The DNA sequence and comparative analysis of human chromosome 10.</title>
        <authorList>
            <person name="Deloukas P."/>
            <person name="Earthrowl M.E."/>
            <person name="Grafham D.V."/>
            <person name="Rubenfield M."/>
            <person name="French L."/>
            <person name="Steward C.A."/>
            <person name="Sims S.K."/>
            <person name="Jones M.C."/>
            <person name="Searle S."/>
            <person name="Scott C."/>
            <person name="Howe K."/>
            <person name="Hunt S.E."/>
            <person name="Andrews T.D."/>
            <person name="Gilbert J.G.R."/>
            <person name="Swarbreck D."/>
            <person name="Ashurst J.L."/>
            <person name="Taylor A."/>
            <person name="Battles J."/>
            <person name="Bird C.P."/>
            <person name="Ainscough R."/>
            <person name="Almeida J.P."/>
            <person name="Ashwell R.I.S."/>
            <person name="Ambrose K.D."/>
            <person name="Babbage A.K."/>
            <person name="Bagguley C.L."/>
            <person name="Bailey J."/>
            <person name="Banerjee R."/>
            <person name="Bates K."/>
            <person name="Beasley H."/>
            <person name="Bray-Allen S."/>
            <person name="Brown A.J."/>
            <person name="Brown J.Y."/>
            <person name="Burford D.C."/>
            <person name="Burrill W."/>
            <person name="Burton J."/>
            <person name="Cahill P."/>
            <person name="Camire D."/>
            <person name="Carter N.P."/>
            <person name="Chapman J.C."/>
            <person name="Clark S.Y."/>
            <person name="Clarke G."/>
            <person name="Clee C.M."/>
            <person name="Clegg S."/>
            <person name="Corby N."/>
            <person name="Coulson A."/>
            <person name="Dhami P."/>
            <person name="Dutta I."/>
            <person name="Dunn M."/>
            <person name="Faulkner L."/>
            <person name="Frankish A."/>
            <person name="Frankland J.A."/>
            <person name="Garner P."/>
            <person name="Garnett J."/>
            <person name="Gribble S."/>
            <person name="Griffiths C."/>
            <person name="Grocock R."/>
            <person name="Gustafson E."/>
            <person name="Hammond S."/>
            <person name="Harley J.L."/>
            <person name="Hart E."/>
            <person name="Heath P.D."/>
            <person name="Ho T.P."/>
            <person name="Hopkins B."/>
            <person name="Horne J."/>
            <person name="Howden P.J."/>
            <person name="Huckle E."/>
            <person name="Hynds C."/>
            <person name="Johnson C."/>
            <person name="Johnson D."/>
            <person name="Kana A."/>
            <person name="Kay M."/>
            <person name="Kimberley A.M."/>
            <person name="Kershaw J.K."/>
            <person name="Kokkinaki M."/>
            <person name="Laird G.K."/>
            <person name="Lawlor S."/>
            <person name="Lee H.M."/>
            <person name="Leongamornlert D.A."/>
            <person name="Laird G."/>
            <person name="Lloyd C."/>
            <person name="Lloyd D.M."/>
            <person name="Loveland J."/>
            <person name="Lovell J."/>
            <person name="McLaren S."/>
            <person name="McLay K.E."/>
            <person name="McMurray A."/>
            <person name="Mashreghi-Mohammadi M."/>
            <person name="Matthews L."/>
            <person name="Milne S."/>
            <person name="Nickerson T."/>
            <person name="Nguyen M."/>
            <person name="Overton-Larty E."/>
            <person name="Palmer S.A."/>
            <person name="Pearce A.V."/>
            <person name="Peck A.I."/>
            <person name="Pelan S."/>
            <person name="Phillimore B."/>
            <person name="Porter K."/>
            <person name="Rice C.M."/>
            <person name="Rogosin A."/>
            <person name="Ross M.T."/>
            <person name="Sarafidou T."/>
            <person name="Sehra H.K."/>
            <person name="Shownkeen R."/>
            <person name="Skuce C.D."/>
            <person name="Smith M."/>
            <person name="Standring L."/>
            <person name="Sycamore N."/>
            <person name="Tester J."/>
            <person name="Thorpe A."/>
            <person name="Torcasso W."/>
            <person name="Tracey A."/>
            <person name="Tromans A."/>
            <person name="Tsolas J."/>
            <person name="Wall M."/>
            <person name="Walsh J."/>
            <person name="Wang H."/>
            <person name="Weinstock K."/>
            <person name="West A.P."/>
            <person name="Willey D.L."/>
            <person name="Whitehead S.L."/>
            <person name="Wilming L."/>
            <person name="Wray P.W."/>
            <person name="Young L."/>
            <person name="Chen Y."/>
            <person name="Lovering R.C."/>
            <person name="Moschonas N.K."/>
            <person name="Siebert R."/>
            <person name="Fechtel K."/>
            <person name="Bentley D."/>
            <person name="Durbin R.M."/>
            <person name="Hubbard T."/>
            <person name="Doucette-Stamm L."/>
            <person name="Beck S."/>
            <person name="Smith D.R."/>
            <person name="Rogers J."/>
        </authorList>
    </citation>
    <scope>NUCLEOTIDE SEQUENCE [LARGE SCALE GENOMIC DNA]</scope>
</reference>
<reference key="5">
    <citation type="submission" date="2005-09" db="EMBL/GenBank/DDBJ databases">
        <authorList>
            <person name="Mural R.J."/>
            <person name="Istrail S."/>
            <person name="Sutton G.G."/>
            <person name="Florea L."/>
            <person name="Halpern A.L."/>
            <person name="Mobarry C.M."/>
            <person name="Lippert R."/>
            <person name="Walenz B."/>
            <person name="Shatkay H."/>
            <person name="Dew I."/>
            <person name="Miller J.R."/>
            <person name="Flanigan M.J."/>
            <person name="Edwards N.J."/>
            <person name="Bolanos R."/>
            <person name="Fasulo D."/>
            <person name="Halldorsson B.V."/>
            <person name="Hannenhalli S."/>
            <person name="Turner R."/>
            <person name="Yooseph S."/>
            <person name="Lu F."/>
            <person name="Nusskern D.R."/>
            <person name="Shue B.C."/>
            <person name="Zheng X.H."/>
            <person name="Zhong F."/>
            <person name="Delcher A.L."/>
            <person name="Huson D.H."/>
            <person name="Kravitz S.A."/>
            <person name="Mouchard L."/>
            <person name="Reinert K."/>
            <person name="Remington K.A."/>
            <person name="Clark A.G."/>
            <person name="Waterman M.S."/>
            <person name="Eichler E.E."/>
            <person name="Adams M.D."/>
            <person name="Hunkapiller M.W."/>
            <person name="Myers E.W."/>
            <person name="Venter J.C."/>
        </authorList>
    </citation>
    <scope>NUCLEOTIDE SEQUENCE [LARGE SCALE GENOMIC DNA]</scope>
</reference>
<reference key="6">
    <citation type="journal article" date="2004" name="Genome Res.">
        <title>The status, quality, and expansion of the NIH full-length cDNA project: the Mammalian Gene Collection (MGC).</title>
        <authorList>
            <consortium name="The MGC Project Team"/>
        </authorList>
    </citation>
    <scope>NUCLEOTIDE SEQUENCE [LARGE SCALE MRNA] (ISOFORM 1)</scope>
    <source>
        <tissue>Brain</tissue>
    </source>
</reference>
<reference key="7">
    <citation type="journal article" date="1995" name="Proc. Natl. Acad. Sci. U.S.A.">
        <title>Identification of a cytoplasmic, phorbol ester-inducible isoform of protein tyrosine phosphatase epsilon.</title>
        <authorList>
            <person name="Elson A."/>
            <person name="Leder P."/>
        </authorList>
    </citation>
    <scope>NUCLEOTIDE SEQUENCE [MRNA] OF 1-98 (ISOFORM 2)</scope>
    <scope>SUBCELLULAR LOCATION</scope>
    <scope>INDUCTION</scope>
</reference>
<reference key="8">
    <citation type="journal article" date="1996" name="Proc. Natl. Acad. Sci. U.S.A.">
        <title>Protein-tyrosine phosphatase activity regulates osteoclast formation and function: inhibition by alendronate.</title>
        <authorList>
            <person name="Schmidt A."/>
            <person name="Rutledge S.J."/>
            <person name="Endo N."/>
            <person name="Opas E."/>
            <person name="Tanaka H."/>
            <person name="Wesolowski G."/>
            <person name="Leu C.T."/>
            <person name="Huang Z."/>
            <person name="Ramachandaran C."/>
            <person name="Rodan S.B."/>
            <person name="Rodan G.A."/>
        </authorList>
    </citation>
    <scope>TISSUE SPECIFICITY</scope>
</reference>
<reference key="9">
    <citation type="journal article" date="1999" name="Eur. J. Biochem.">
        <title>Distinct promoters control transmembrane and cytosolic protein tyrosine phosphatase epsilon expression during macrophage differentiation.</title>
        <authorList>
            <person name="Tanuma N."/>
            <person name="Nakamura K."/>
            <person name="Kikuchi K."/>
        </authorList>
    </citation>
    <scope>ALTERNATIVE PROMOTER USAGE</scope>
</reference>
<reference key="10">
    <citation type="journal article" date="2000" name="Oncogene">
        <title>Generation of novel cytoplasmic forms of protein tyrosine phosphatase epsilon by proteolytic processing and translational control.</title>
        <authorList>
            <person name="Gil-Henn H."/>
            <person name="Volohonsky G."/>
            <person name="Toledano-Katchalski H."/>
            <person name="Gandre S."/>
            <person name="Elson A."/>
        </authorList>
    </citation>
    <scope>IDENTIFICATION (ISOFORM 3)</scope>
    <scope>ALTERNATIVE INITIATION</scope>
    <scope>SUBCELLULAR LOCATION</scope>
    <scope>PROTEOLYTIC PROCESSING</scope>
    <scope>PHOSPHORYLATION</scope>
    <scope>GLYCOSYLATION</scope>
    <scope>INTERACTION WITH GRB2</scope>
</reference>
<reference key="11">
    <citation type="journal article" date="2009" name="Sci. Signal.">
        <title>Quantitative phosphoproteomic analysis of T cell receptor signaling reveals system-wide modulation of protein-protein interactions.</title>
        <authorList>
            <person name="Mayya V."/>
            <person name="Lundgren D.H."/>
            <person name="Hwang S.-I."/>
            <person name="Rezaul K."/>
            <person name="Wu L."/>
            <person name="Eng J.K."/>
            <person name="Rodionov V."/>
            <person name="Han D.K."/>
        </authorList>
    </citation>
    <scope>PHOSPHORYLATION [LARGE SCALE ANALYSIS] AT TYR-696</scope>
    <scope>IDENTIFICATION BY MASS SPECTROMETRY [LARGE SCALE ANALYSIS]</scope>
    <source>
        <tissue>Leukemic T-cell</tissue>
    </source>
</reference>
<reference key="12">
    <citation type="journal article" date="2009" name="Cell">
        <title>Large-scale structural analysis of the classical human protein tyrosine phosphatome.</title>
        <authorList>
            <person name="Barr A.J."/>
            <person name="Ugochukwu E."/>
            <person name="Lee W.H."/>
            <person name="King O.N.F."/>
            <person name="Filippakopoulos P."/>
            <person name="Alfano I."/>
            <person name="Savitsky P."/>
            <person name="Burgess-Brown N.A."/>
            <person name="Mueller S."/>
            <person name="Knapp S."/>
        </authorList>
    </citation>
    <scope>X-RAY CRYSTALLOGRAPHY (3.2 ANGSTROMS) OF 107-697</scope>
    <scope>SUBUNIT</scope>
</reference>
<comment type="function">
    <text evidence="1">Isoform 1 plays a critical role in signaling transduction pathways and phosphoprotein network topology in red blood cells. May play a role in osteoclast formation and function (By similarity).</text>
</comment>
<comment type="function">
    <text evidence="1">Isoform 2 acts as a negative regulator of insulin receptor (IR) signaling in skeletal muscle. Regulates insulin-induced tyrosine phosphorylation of insulin receptor (IR) and insulin receptor substrate 1 (IRS-1), phosphorylation of protein kinase B and glycogen synthase kinase-3 and insulin induced stimulation of glucose uptake (By similarity).</text>
</comment>
<comment type="function">
    <text evidence="1">Isoform 1 and isoform 2 act as a negative regulator of FceRI-mediated signal transduction leading to cytokine production and degranulation, most likely by acting at the level of SYK to affect downstream events such as phosphorylation of SLP76 and LAT and mobilization of Ca(2+).</text>
</comment>
<comment type="catalytic activity">
    <reaction evidence="4">
        <text>O-phospho-L-tyrosyl-[protein] + H2O = L-tyrosyl-[protein] + phosphate</text>
        <dbReference type="Rhea" id="RHEA:10684"/>
        <dbReference type="Rhea" id="RHEA-COMP:10136"/>
        <dbReference type="Rhea" id="RHEA-COMP:20101"/>
        <dbReference type="ChEBI" id="CHEBI:15377"/>
        <dbReference type="ChEBI" id="CHEBI:43474"/>
        <dbReference type="ChEBI" id="CHEBI:46858"/>
        <dbReference type="ChEBI" id="CHEBI:61978"/>
        <dbReference type="EC" id="3.1.3.48"/>
    </reaction>
</comment>
<comment type="subunit">
    <text evidence="1">Monomer. Isoform 2: Homodimer. Can form oligomers. Dimerization is increased by oxidative stress and decreased by EGFR. Isoform 2 interacts with GRB2 (By similarity).</text>
</comment>
<comment type="subcellular location">
    <molecule>Isoform 1</molecule>
    <subcellularLocation>
        <location>Cell membrane</location>
        <topology>Single-pass type I membrane protein</topology>
    </subcellularLocation>
</comment>
<comment type="subcellular location">
    <molecule>Isoform 2</molecule>
    <subcellularLocation>
        <location>Cytoplasm</location>
    </subcellularLocation>
    <text evidence="1">Predominantly cytoplasmic. A small fraction is also associated with nucleus and membrane. Insulin induces translocation to the membrane (By similarity).</text>
</comment>
<comment type="subcellular location">
    <molecule>Isoform 3</molecule>
    <subcellularLocation>
        <location>Cytoplasm</location>
    </subcellularLocation>
</comment>
<comment type="alternative products">
    <event type="alternative promoter"/>
    <event type="alternative initiation"/>
    <isoform>
        <id>P23469-1</id>
        <name>1</name>
        <name>PTPeM</name>
        <name>RPTPe</name>
        <name>tm-PTPe</name>
        <sequence type="displayed"/>
    </isoform>
    <isoform>
        <id>P23469-2</id>
        <name>2</name>
        <name>PTPeC</name>
        <name>cyt-PTPe</name>
        <sequence type="described" ref="VSP_007778"/>
    </isoform>
    <isoform>
        <id>P23469-3</id>
        <name>3</name>
        <name>p67</name>
        <sequence type="described" ref="VSP_038490"/>
    </isoform>
</comment>
<comment type="tissue specificity">
    <text evidence="6">Expressed in giant cell tumor (osteoclastoma rich in multinucleated osteoclastic cells).</text>
</comment>
<comment type="induction">
    <text evidence="7">Up-regulated by 12-O-tetradecanoylphorbol-13-acetate (TPA) in HL-60 cells.</text>
</comment>
<comment type="domain">
    <text evidence="1">The tyrosine-protein phosphatase 2 domain (D2) mediates dimerization. The extreme N- and C- termini of the D2 domain act to inhibit dimerization and removal of these sequences increases dimerization and inhibits enzyme activity (By similarity).</text>
</comment>
<comment type="PTM">
    <text evidence="5">A catalytically active cytoplasmic form (p65) is produced by proteolytic cleavage of either isoform 1, isoform 2 or isoform 3.</text>
</comment>
<comment type="PTM">
    <text evidence="5">Isoform 1 and isoform 2 are phosphorylated on tyrosine residues by tyrosine kinase Neu.</text>
</comment>
<comment type="PTM">
    <text evidence="5">Isoform 1 is glycosylated.</text>
</comment>
<comment type="miscellaneous">
    <molecule>Isoform 1</molecule>
    <text>Produced by alternative promoter usage.</text>
</comment>
<comment type="miscellaneous">
    <molecule>Isoform 2</molecule>
    <text evidence="10">Produced by alternative promoter usage.</text>
</comment>
<comment type="miscellaneous">
    <molecule>Isoform 3</molecule>
    <text evidence="10">Produced by alternative initiation at Met-86 of isoform 1.</text>
</comment>
<comment type="similarity">
    <text evidence="10">Belongs to the protein-tyrosine phosphatase family. Receptor class 4 subfamily.</text>
</comment>
<comment type="sequence caution" evidence="10">
    <conflict type="miscellaneous discrepancy">
        <sequence resource="EMBL-CDS" id="AAC50324"/>
    </conflict>
    <text>Contaminating sequence. Sequence of unknown origin in the C-terminal part.</text>
</comment>
<feature type="signal peptide" evidence="2">
    <location>
        <begin position="1"/>
        <end position="19"/>
    </location>
</feature>
<feature type="chain" id="PRO_0000025439" description="Receptor-type tyrosine-protein phosphatase epsilon">
    <location>
        <begin position="20"/>
        <end position="700"/>
    </location>
</feature>
<feature type="topological domain" description="Extracellular" evidence="2">
    <location>
        <begin position="20"/>
        <end position="46"/>
    </location>
</feature>
<feature type="transmembrane region" description="Helical" evidence="2">
    <location>
        <begin position="47"/>
        <end position="69"/>
    </location>
</feature>
<feature type="topological domain" description="Cytoplasmic" evidence="2">
    <location>
        <begin position="70"/>
        <end position="700"/>
    </location>
</feature>
<feature type="domain" description="Tyrosine-protein phosphatase 1" evidence="3">
    <location>
        <begin position="135"/>
        <end position="394"/>
    </location>
</feature>
<feature type="domain" description="Tyrosine-protein phosphatase 2" evidence="3">
    <location>
        <begin position="426"/>
        <end position="689"/>
    </location>
</feature>
<feature type="active site" description="Phosphocysteine intermediate" evidence="1">
    <location>
        <position position="335"/>
    </location>
</feature>
<feature type="active site" description="Phosphocysteine intermediate" evidence="1">
    <location>
        <position position="630"/>
    </location>
</feature>
<feature type="binding site" evidence="1">
    <location>
        <position position="303"/>
    </location>
    <ligand>
        <name>substrate</name>
    </ligand>
</feature>
<feature type="binding site" evidence="1">
    <location>
        <begin position="335"/>
        <end position="341"/>
    </location>
    <ligand>
        <name>substrate</name>
    </ligand>
</feature>
<feature type="binding site" evidence="1">
    <location>
        <position position="379"/>
    </location>
    <ligand>
        <name>substrate</name>
    </ligand>
</feature>
<feature type="modified residue" description="Phosphotyrosine" evidence="11">
    <location>
        <position position="696"/>
    </location>
</feature>
<feature type="glycosylation site" description="N-linked (GlcNAc...) asparagine" evidence="2">
    <location>
        <position position="23"/>
    </location>
</feature>
<feature type="glycosylation site" description="N-linked (GlcNAc...) asparagine" evidence="2">
    <location>
        <position position="30"/>
    </location>
</feature>
<feature type="splice variant" id="VSP_038490" description="In isoform 3." evidence="10">
    <location>
        <begin position="1"/>
        <end position="85"/>
    </location>
</feature>
<feature type="splice variant" id="VSP_007778" description="In isoform 2." evidence="8 9">
    <original>MEPLCPLLLVGFSLPLARALRGNETTADSNETTTTSGPPDPGASQPLLAWLLLPLLLLLLVLLLAAYFFR</original>
    <variation>MSNRSSFSRLTW</variation>
    <location>
        <begin position="1"/>
        <end position="70"/>
    </location>
</feature>
<feature type="sequence conflict" description="In Ref. 2; CAC86583." evidence="10" ref="2">
    <original>E</original>
    <variation>D</variation>
    <location>
        <position position="516"/>
    </location>
</feature>
<feature type="helix" evidence="14">
    <location>
        <begin position="117"/>
        <end position="119"/>
    </location>
</feature>
<feature type="helix" evidence="14">
    <location>
        <begin position="120"/>
        <end position="140"/>
    </location>
</feature>
<feature type="turn" evidence="14">
    <location>
        <begin position="146"/>
        <end position="148"/>
    </location>
</feature>
<feature type="helix" evidence="14">
    <location>
        <begin position="152"/>
        <end position="155"/>
    </location>
</feature>
<feature type="helix" evidence="14">
    <location>
        <begin position="157"/>
        <end position="162"/>
    </location>
</feature>
<feature type="turn" evidence="14">
    <location>
        <begin position="172"/>
        <end position="174"/>
    </location>
</feature>
<feature type="strand" evidence="14">
    <location>
        <begin position="175"/>
        <end position="177"/>
    </location>
</feature>
<feature type="turn" evidence="14">
    <location>
        <begin position="185"/>
        <end position="188"/>
    </location>
</feature>
<feature type="strand" evidence="14">
    <location>
        <begin position="189"/>
        <end position="197"/>
    </location>
</feature>
<feature type="strand" evidence="14">
    <location>
        <begin position="200"/>
        <end position="207"/>
    </location>
</feature>
<feature type="helix" evidence="14">
    <location>
        <begin position="212"/>
        <end position="214"/>
    </location>
</feature>
<feature type="helix" evidence="14">
    <location>
        <begin position="215"/>
        <end position="225"/>
    </location>
</feature>
<feature type="strand" evidence="14">
    <location>
        <begin position="229"/>
        <end position="232"/>
    </location>
</feature>
<feature type="strand" evidence="14">
    <location>
        <begin position="236"/>
        <end position="238"/>
    </location>
</feature>
<feature type="strand" evidence="14">
    <location>
        <begin position="250"/>
        <end position="256"/>
    </location>
</feature>
<feature type="strand" evidence="14">
    <location>
        <begin position="259"/>
        <end position="268"/>
    </location>
</feature>
<feature type="strand" evidence="14">
    <location>
        <begin position="270"/>
        <end position="281"/>
    </location>
</feature>
<feature type="strand" evidence="14">
    <location>
        <begin position="291"/>
        <end position="298"/>
    </location>
</feature>
<feature type="strand" evidence="14">
    <location>
        <begin position="303"/>
        <end position="306"/>
    </location>
</feature>
<feature type="strand" evidence="14">
    <location>
        <begin position="308"/>
        <end position="310"/>
    </location>
</feature>
<feature type="helix" evidence="14">
    <location>
        <begin position="311"/>
        <end position="323"/>
    </location>
</feature>
<feature type="strand" evidence="14">
    <location>
        <begin position="331"/>
        <end position="334"/>
    </location>
</feature>
<feature type="strand" evidence="14">
    <location>
        <begin position="336"/>
        <end position="339"/>
    </location>
</feature>
<feature type="helix" evidence="14">
    <location>
        <begin position="340"/>
        <end position="358"/>
    </location>
</feature>
<feature type="strand" evidence="14">
    <location>
        <begin position="359"/>
        <end position="361"/>
    </location>
</feature>
<feature type="helix" evidence="14">
    <location>
        <begin position="363"/>
        <end position="371"/>
    </location>
</feature>
<feature type="helix" evidence="14">
    <location>
        <begin position="381"/>
        <end position="397"/>
    </location>
</feature>
<feature type="helix" evidence="15">
    <location>
        <begin position="426"/>
        <end position="434"/>
    </location>
</feature>
<feature type="helix" evidence="15">
    <location>
        <begin position="440"/>
        <end position="442"/>
    </location>
</feature>
<feature type="helix" evidence="15">
    <location>
        <begin position="444"/>
        <end position="447"/>
    </location>
</feature>
<feature type="helix" evidence="15">
    <location>
        <begin position="449"/>
        <end position="452"/>
    </location>
</feature>
<feature type="turn" evidence="15">
    <location>
        <begin position="464"/>
        <end position="466"/>
    </location>
</feature>
<feature type="strand" evidence="15">
    <location>
        <begin position="467"/>
        <end position="469"/>
    </location>
</feature>
<feature type="strand" evidence="13">
    <location>
        <begin position="474"/>
        <end position="476"/>
    </location>
</feature>
<feature type="strand" evidence="15">
    <location>
        <begin position="481"/>
        <end position="487"/>
    </location>
</feature>
<feature type="strand" evidence="15">
    <location>
        <begin position="490"/>
        <end position="492"/>
    </location>
</feature>
<feature type="strand" evidence="15">
    <location>
        <begin position="496"/>
        <end position="499"/>
    </location>
</feature>
<feature type="turn" evidence="15">
    <location>
        <begin position="504"/>
        <end position="506"/>
    </location>
</feature>
<feature type="helix" evidence="15">
    <location>
        <begin position="507"/>
        <end position="516"/>
    </location>
</feature>
<feature type="strand" evidence="15">
    <location>
        <begin position="521"/>
        <end position="524"/>
    </location>
</feature>
<feature type="strand" evidence="15">
    <location>
        <begin position="528"/>
        <end position="530"/>
    </location>
</feature>
<feature type="strand" evidence="15">
    <location>
        <begin position="542"/>
        <end position="548"/>
    </location>
</feature>
<feature type="strand" evidence="15">
    <location>
        <begin position="551"/>
        <end position="561"/>
    </location>
</feature>
<feature type="strand" evidence="15">
    <location>
        <begin position="564"/>
        <end position="573"/>
    </location>
</feature>
<feature type="helix" evidence="15">
    <location>
        <begin position="577"/>
        <end position="579"/>
    </location>
</feature>
<feature type="turn" evidence="15">
    <location>
        <begin position="580"/>
        <end position="582"/>
    </location>
</feature>
<feature type="strand" evidence="15">
    <location>
        <begin position="584"/>
        <end position="592"/>
    </location>
</feature>
<feature type="strand" evidence="15">
    <location>
        <begin position="597"/>
        <end position="599"/>
    </location>
</feature>
<feature type="helix" evidence="15">
    <location>
        <begin position="605"/>
        <end position="621"/>
    </location>
</feature>
<feature type="strand" evidence="15">
    <location>
        <begin position="626"/>
        <end position="634"/>
    </location>
</feature>
<feature type="helix" evidence="15">
    <location>
        <begin position="635"/>
        <end position="653"/>
    </location>
</feature>
<feature type="strand" evidence="12">
    <location>
        <begin position="654"/>
        <end position="656"/>
    </location>
</feature>
<feature type="helix" evidence="15">
    <location>
        <begin position="659"/>
        <end position="666"/>
    </location>
</feature>
<feature type="helix" evidence="15">
    <location>
        <begin position="676"/>
        <end position="693"/>
    </location>
</feature>
<feature type="helix" evidence="13">
    <location>
        <begin position="694"/>
        <end position="696"/>
    </location>
</feature>
<keyword id="KW-0002">3D-structure</keyword>
<keyword id="KW-0024">Alternative initiation</keyword>
<keyword id="KW-0877">Alternative promoter usage</keyword>
<keyword id="KW-1003">Cell membrane</keyword>
<keyword id="KW-0963">Cytoplasm</keyword>
<keyword id="KW-0325">Glycoprotein</keyword>
<keyword id="KW-0378">Hydrolase</keyword>
<keyword id="KW-0472">Membrane</keyword>
<keyword id="KW-0597">Phosphoprotein</keyword>
<keyword id="KW-0904">Protein phosphatase</keyword>
<keyword id="KW-1267">Proteomics identification</keyword>
<keyword id="KW-1185">Reference proteome</keyword>
<keyword id="KW-0677">Repeat</keyword>
<keyword id="KW-0732">Signal</keyword>
<keyword id="KW-0812">Transmembrane</keyword>
<keyword id="KW-1133">Transmembrane helix</keyword>
<protein>
    <recommendedName>
        <fullName>Receptor-type tyrosine-protein phosphatase epsilon</fullName>
        <shortName>Protein-tyrosine phosphatase epsilon</shortName>
        <shortName>R-PTP-epsilon</shortName>
        <ecNumber>3.1.3.48</ecNumber>
    </recommendedName>
</protein>
<sequence length="700" mass="80642">MEPLCPLLLVGFSLPLARALRGNETTADSNETTTTSGPPDPGASQPLLAWLLLPLLLLLLVLLLAAYFFRFRKQRKAVVSTSDKKMPNGILEEQEQQRVMLLSRSPSGPKKYFPIPVEHLEEEIRIRSADDCKQFREEFNSLPSGHIQGTFELANKEENREKNRYPNILPNDHSRVILSQLDGIPCSDYINASYIDGYKEKNKFIAAQGPKQETVNDFWRMVWEQKSATIVMLTNLKERKEEKCHQYWPDQGCWTYGNIRVCVEDCVVLVDYTIRKFCIQPQLPDGCKAPRLVSQLHFTSWPDFGVPFTPIGMLKFLKKVKTLNPVHAGPIVVHCSAGVGRTGTFIVIDAMMAMMHAEQKVDVFEFVSRIRNQRPQMVQTDMQYTFIYQALLEYYLYGDTELDVSSLEKHLQTMHGTTTHFDKIGLEEEFRKLTNVRIMKENMRTGNLPANMKKARVIQIIPYDFNRVILSMKRGQEYTDYINASFIDGYRQKDYFIATQGPLAHTVEDFWRMIWEWKSHTIVMLTEVQEREQDKCYQYWPTEGSVTHGEITIEIKNDTLSEAISIRDFLVTLNQPQARQEEQVRVVRQFHFHGWPEIGIPAEGKGMIDLIAAVQKQQQQTGNHPITVHCSAGAGRTGTFIALSNILERVKAEGLLDVFQAVKSLRLQRPHMVQTLEQYEFCYKVVQDFIDIFSDYANFK</sequence>
<dbReference type="EC" id="3.1.3.48"/>
<dbReference type="EMBL" id="X54134">
    <property type="protein sequence ID" value="CAA38069.1"/>
    <property type="molecule type" value="mRNA"/>
</dbReference>
<dbReference type="EMBL" id="AJ315969">
    <property type="protein sequence ID" value="CAC86583.1"/>
    <property type="molecule type" value="mRNA"/>
</dbReference>
<dbReference type="EMBL" id="AK291828">
    <property type="protein sequence ID" value="BAF84517.1"/>
    <property type="molecule type" value="mRNA"/>
</dbReference>
<dbReference type="EMBL" id="AL390236">
    <property type="status" value="NOT_ANNOTATED_CDS"/>
    <property type="molecule type" value="Genomic_DNA"/>
</dbReference>
<dbReference type="EMBL" id="CH471066">
    <property type="protein sequence ID" value="EAW49180.1"/>
    <property type="molecule type" value="Genomic_DNA"/>
</dbReference>
<dbReference type="EMBL" id="CH471066">
    <property type="protein sequence ID" value="EAW49181.1"/>
    <property type="molecule type" value="Genomic_DNA"/>
</dbReference>
<dbReference type="EMBL" id="CH471066">
    <property type="protein sequence ID" value="EAW49182.1"/>
    <property type="molecule type" value="Genomic_DNA"/>
</dbReference>
<dbReference type="EMBL" id="CH471066">
    <property type="protein sequence ID" value="EAW49184.1"/>
    <property type="molecule type" value="Genomic_DNA"/>
</dbReference>
<dbReference type="EMBL" id="BC050062">
    <property type="protein sequence ID" value="AAH50062.1"/>
    <property type="molecule type" value="mRNA"/>
</dbReference>
<dbReference type="EMBL" id="U36623">
    <property type="protein sequence ID" value="AAC50324.1"/>
    <property type="status" value="ALT_SEQ"/>
    <property type="molecule type" value="mRNA"/>
</dbReference>
<dbReference type="CCDS" id="CCDS7657.1">
    <molecule id="P23469-1"/>
</dbReference>
<dbReference type="CCDS" id="CCDS7658.1">
    <molecule id="P23469-2"/>
</dbReference>
<dbReference type="PIR" id="S12053">
    <property type="entry name" value="S12053"/>
</dbReference>
<dbReference type="RefSeq" id="NP_001303605.1">
    <property type="nucleotide sequence ID" value="NM_001316676.1"/>
</dbReference>
<dbReference type="RefSeq" id="NP_001303606.1">
    <molecule id="P23469-1"/>
    <property type="nucleotide sequence ID" value="NM_001316677.2"/>
</dbReference>
<dbReference type="RefSeq" id="NP_001310283.1">
    <molecule id="P23469-1"/>
    <property type="nucleotide sequence ID" value="NM_001323354.2"/>
</dbReference>
<dbReference type="RefSeq" id="NP_006495.1">
    <molecule id="P23469-1"/>
    <property type="nucleotide sequence ID" value="NM_006504.6"/>
</dbReference>
<dbReference type="RefSeq" id="NP_569119.1">
    <molecule id="P23469-2"/>
    <property type="nucleotide sequence ID" value="NM_130435.5"/>
</dbReference>
<dbReference type="RefSeq" id="XP_005252748.1">
    <molecule id="P23469-1"/>
    <property type="nucleotide sequence ID" value="XM_005252691.3"/>
</dbReference>
<dbReference type="RefSeq" id="XP_016871957.1">
    <property type="nucleotide sequence ID" value="XM_017016468.1"/>
</dbReference>
<dbReference type="RefSeq" id="XP_054222420.1">
    <molecule id="P23469-1"/>
    <property type="nucleotide sequence ID" value="XM_054366445.1"/>
</dbReference>
<dbReference type="PDB" id="2JJD">
    <property type="method" value="X-ray"/>
    <property type="resolution" value="3.20 A"/>
    <property type="chains" value="A/B/C/D/E/F=107-697"/>
</dbReference>
<dbReference type="PDB" id="6D3F">
    <property type="method" value="X-ray"/>
    <property type="resolution" value="2.27 A"/>
    <property type="chains" value="A/B=425-700"/>
</dbReference>
<dbReference type="PDB" id="6D4D">
    <property type="method" value="X-ray"/>
    <property type="resolution" value="1.76 A"/>
    <property type="chains" value="A/B=107-398"/>
</dbReference>
<dbReference type="PDB" id="6D4F">
    <property type="method" value="X-ray"/>
    <property type="resolution" value="1.91 A"/>
    <property type="chains" value="A=425-700"/>
</dbReference>
<dbReference type="PDBsum" id="2JJD"/>
<dbReference type="PDBsum" id="6D3F"/>
<dbReference type="PDBsum" id="6D4D"/>
<dbReference type="PDBsum" id="6D4F"/>
<dbReference type="SASBDB" id="P23469"/>
<dbReference type="SMR" id="P23469"/>
<dbReference type="BioGRID" id="111755">
    <property type="interactions" value="58"/>
</dbReference>
<dbReference type="FunCoup" id="P23469">
    <property type="interactions" value="2482"/>
</dbReference>
<dbReference type="IntAct" id="P23469">
    <property type="interactions" value="27"/>
</dbReference>
<dbReference type="MINT" id="P23469"/>
<dbReference type="STRING" id="9606.ENSP00000254667"/>
<dbReference type="BindingDB" id="P23469"/>
<dbReference type="ChEMBL" id="CHEMBL4850"/>
<dbReference type="DrugBank" id="DB00630">
    <property type="generic name" value="Alendronic acid"/>
</dbReference>
<dbReference type="DrugBank" id="DB01133">
    <property type="generic name" value="Tiludronic acid"/>
</dbReference>
<dbReference type="DEPOD" id="PTPRE"/>
<dbReference type="GlyCosmos" id="P23469">
    <property type="glycosylation" value="2 sites, No reported glycans"/>
</dbReference>
<dbReference type="GlyGen" id="P23469">
    <property type="glycosylation" value="3 sites, 1 O-linked glycan (1 site)"/>
</dbReference>
<dbReference type="iPTMnet" id="P23469"/>
<dbReference type="PhosphoSitePlus" id="P23469"/>
<dbReference type="BioMuta" id="PTPRE"/>
<dbReference type="DMDM" id="126471"/>
<dbReference type="CPTAC" id="CPTAC-1569"/>
<dbReference type="jPOST" id="P23469"/>
<dbReference type="MassIVE" id="P23469"/>
<dbReference type="PaxDb" id="9606-ENSP00000254667"/>
<dbReference type="PeptideAtlas" id="P23469"/>
<dbReference type="ProteomicsDB" id="54107">
    <molecule id="P23469-1"/>
</dbReference>
<dbReference type="ProteomicsDB" id="54108">
    <molecule id="P23469-2"/>
</dbReference>
<dbReference type="ProteomicsDB" id="54109">
    <molecule id="P23469-3"/>
</dbReference>
<dbReference type="Antibodypedia" id="3004">
    <property type="antibodies" value="541 antibodies from 31 providers"/>
</dbReference>
<dbReference type="DNASU" id="5791"/>
<dbReference type="Ensembl" id="ENST00000254667.8">
    <molecule id="P23469-1"/>
    <property type="protein sequence ID" value="ENSP00000254667.3"/>
    <property type="gene ID" value="ENSG00000132334.17"/>
</dbReference>
<dbReference type="Ensembl" id="ENST00000306042.9">
    <molecule id="P23469-2"/>
    <property type="protein sequence ID" value="ENSP00000303350.5"/>
    <property type="gene ID" value="ENSG00000132334.17"/>
</dbReference>
<dbReference type="GeneID" id="5791"/>
<dbReference type="KEGG" id="hsa:5791"/>
<dbReference type="MANE-Select" id="ENST00000254667.8">
    <property type="protein sequence ID" value="ENSP00000254667.3"/>
    <property type="RefSeq nucleotide sequence ID" value="NM_006504.6"/>
    <property type="RefSeq protein sequence ID" value="NP_006495.1"/>
</dbReference>
<dbReference type="UCSC" id="uc001lkb.4">
    <molecule id="P23469-1"/>
    <property type="organism name" value="human"/>
</dbReference>
<dbReference type="AGR" id="HGNC:9669"/>
<dbReference type="CTD" id="5791"/>
<dbReference type="DisGeNET" id="5791"/>
<dbReference type="GeneCards" id="PTPRE"/>
<dbReference type="HGNC" id="HGNC:9669">
    <property type="gene designation" value="PTPRE"/>
</dbReference>
<dbReference type="HPA" id="ENSG00000132334">
    <property type="expression patterns" value="Tissue enhanced (bone)"/>
</dbReference>
<dbReference type="MIM" id="600926">
    <property type="type" value="gene"/>
</dbReference>
<dbReference type="neXtProt" id="NX_P23469"/>
<dbReference type="OpenTargets" id="ENSG00000132334"/>
<dbReference type="PharmGKB" id="PA34014"/>
<dbReference type="VEuPathDB" id="HostDB:ENSG00000132334"/>
<dbReference type="eggNOG" id="KOG4228">
    <property type="taxonomic scope" value="Eukaryota"/>
</dbReference>
<dbReference type="GeneTree" id="ENSGT00940000156570"/>
<dbReference type="HOGENOM" id="CLU_001645_8_2_1"/>
<dbReference type="InParanoid" id="P23469"/>
<dbReference type="OMA" id="FCVHSLQ"/>
<dbReference type="OrthoDB" id="6144703at2759"/>
<dbReference type="PAN-GO" id="P23469">
    <property type="GO annotations" value="2 GO annotations based on evolutionary models"/>
</dbReference>
<dbReference type="PhylomeDB" id="P23469"/>
<dbReference type="TreeFam" id="TF351829"/>
<dbReference type="BRENDA" id="3.1.3.48">
    <property type="organism ID" value="2681"/>
</dbReference>
<dbReference type="PathwayCommons" id="P23469"/>
<dbReference type="SignaLink" id="P23469"/>
<dbReference type="SIGNOR" id="P23469"/>
<dbReference type="BioGRID-ORCS" id="5791">
    <property type="hits" value="14 hits in 1164 CRISPR screens"/>
</dbReference>
<dbReference type="ChiTaRS" id="PTPRE">
    <property type="organism name" value="human"/>
</dbReference>
<dbReference type="EvolutionaryTrace" id="P23469"/>
<dbReference type="GeneWiki" id="PTPRE"/>
<dbReference type="GenomeRNAi" id="5791"/>
<dbReference type="Pharos" id="P23469">
    <property type="development level" value="Tbio"/>
</dbReference>
<dbReference type="PRO" id="PR:P23469"/>
<dbReference type="Proteomes" id="UP000005640">
    <property type="component" value="Chromosome 10"/>
</dbReference>
<dbReference type="RNAct" id="P23469">
    <property type="molecule type" value="protein"/>
</dbReference>
<dbReference type="Bgee" id="ENSG00000132334">
    <property type="expression patterns" value="Expressed in monocyte and 182 other cell types or tissues"/>
</dbReference>
<dbReference type="ExpressionAtlas" id="P23469">
    <property type="expression patterns" value="baseline and differential"/>
</dbReference>
<dbReference type="GO" id="GO:0005737">
    <property type="term" value="C:cytoplasm"/>
    <property type="evidence" value="ECO:0000314"/>
    <property type="project" value="UniProtKB"/>
</dbReference>
<dbReference type="GO" id="GO:0005634">
    <property type="term" value="C:nucleus"/>
    <property type="evidence" value="ECO:0000314"/>
    <property type="project" value="UniProtKB"/>
</dbReference>
<dbReference type="GO" id="GO:0005886">
    <property type="term" value="C:plasma membrane"/>
    <property type="evidence" value="ECO:0000314"/>
    <property type="project" value="UniProtKB"/>
</dbReference>
<dbReference type="GO" id="GO:0042802">
    <property type="term" value="F:identical protein binding"/>
    <property type="evidence" value="ECO:0007669"/>
    <property type="project" value="Ensembl"/>
</dbReference>
<dbReference type="GO" id="GO:0004725">
    <property type="term" value="F:protein tyrosine phosphatase activity"/>
    <property type="evidence" value="ECO:0000318"/>
    <property type="project" value="GO_Central"/>
</dbReference>
<dbReference type="GO" id="GO:0005001">
    <property type="term" value="F:transmembrane receptor protein tyrosine phosphatase activity"/>
    <property type="evidence" value="ECO:0000304"/>
    <property type="project" value="ProtInc"/>
</dbReference>
<dbReference type="GO" id="GO:0007185">
    <property type="term" value="P:cell surface receptor protein tyrosine phosphatase signaling pathway"/>
    <property type="evidence" value="ECO:0007669"/>
    <property type="project" value="Ensembl"/>
</dbReference>
<dbReference type="GO" id="GO:0046627">
    <property type="term" value="P:negative regulation of insulin receptor signaling pathway"/>
    <property type="evidence" value="ECO:0000250"/>
    <property type="project" value="UniProtKB"/>
</dbReference>
<dbReference type="GO" id="GO:0006470">
    <property type="term" value="P:protein dephosphorylation"/>
    <property type="evidence" value="ECO:0000304"/>
    <property type="project" value="ProtInc"/>
</dbReference>
<dbReference type="GO" id="GO:0033003">
    <property type="term" value="P:regulation of mast cell activation"/>
    <property type="evidence" value="ECO:0007669"/>
    <property type="project" value="Ensembl"/>
</dbReference>
<dbReference type="GO" id="GO:0007165">
    <property type="term" value="P:signal transduction"/>
    <property type="evidence" value="ECO:0000318"/>
    <property type="project" value="GO_Central"/>
</dbReference>
<dbReference type="CDD" id="cd14620">
    <property type="entry name" value="R-PTPc-E-1"/>
    <property type="match status" value="1"/>
</dbReference>
<dbReference type="CDD" id="cd14622">
    <property type="entry name" value="R-PTPc-E-2"/>
    <property type="match status" value="1"/>
</dbReference>
<dbReference type="FunFam" id="3.90.190.10:FF:000007">
    <property type="entry name" value="Receptor-type tyrosine-protein phosphatase alpha"/>
    <property type="match status" value="1"/>
</dbReference>
<dbReference type="FunFam" id="3.90.190.10:FF:000022">
    <property type="entry name" value="Receptor-type tyrosine-protein phosphatase epsilon"/>
    <property type="match status" value="1"/>
</dbReference>
<dbReference type="Gene3D" id="3.90.190.10">
    <property type="entry name" value="Protein tyrosine phosphatase superfamily"/>
    <property type="match status" value="2"/>
</dbReference>
<dbReference type="InterPro" id="IPR029021">
    <property type="entry name" value="Prot-tyrosine_phosphatase-like"/>
</dbReference>
<dbReference type="InterPro" id="IPR050348">
    <property type="entry name" value="Protein-Tyr_Phosphatase"/>
</dbReference>
<dbReference type="InterPro" id="IPR000242">
    <property type="entry name" value="PTP_cat"/>
</dbReference>
<dbReference type="InterPro" id="IPR016130">
    <property type="entry name" value="Tyr_Pase_AS"/>
</dbReference>
<dbReference type="InterPro" id="IPR003595">
    <property type="entry name" value="Tyr_Pase_cat"/>
</dbReference>
<dbReference type="InterPro" id="IPR000387">
    <property type="entry name" value="Tyr_Pase_dom"/>
</dbReference>
<dbReference type="InterPro" id="IPR016336">
    <property type="entry name" value="Tyr_Pase_rcpt_a/e-type"/>
</dbReference>
<dbReference type="PANTHER" id="PTHR19134">
    <property type="entry name" value="RECEPTOR-TYPE TYROSINE-PROTEIN PHOSPHATASE"/>
    <property type="match status" value="1"/>
</dbReference>
<dbReference type="PANTHER" id="PTHR19134:SF499">
    <property type="entry name" value="RECEPTOR-TYPE TYROSINE-PROTEIN PHOSPHATASE EPSILON"/>
    <property type="match status" value="1"/>
</dbReference>
<dbReference type="Pfam" id="PF00102">
    <property type="entry name" value="Y_phosphatase"/>
    <property type="match status" value="2"/>
</dbReference>
<dbReference type="PIRSF" id="PIRSF002006">
    <property type="entry name" value="PTPR_alpha_epsilon"/>
    <property type="match status" value="1"/>
</dbReference>
<dbReference type="PRINTS" id="PR00700">
    <property type="entry name" value="PRTYPHPHTASE"/>
</dbReference>
<dbReference type="SMART" id="SM00194">
    <property type="entry name" value="PTPc"/>
    <property type="match status" value="2"/>
</dbReference>
<dbReference type="SMART" id="SM00404">
    <property type="entry name" value="PTPc_motif"/>
    <property type="match status" value="2"/>
</dbReference>
<dbReference type="SUPFAM" id="SSF52799">
    <property type="entry name" value="(Phosphotyrosine protein) phosphatases II"/>
    <property type="match status" value="2"/>
</dbReference>
<dbReference type="PROSITE" id="PS00383">
    <property type="entry name" value="TYR_PHOSPHATASE_1"/>
    <property type="match status" value="2"/>
</dbReference>
<dbReference type="PROSITE" id="PS50056">
    <property type="entry name" value="TYR_PHOSPHATASE_2"/>
    <property type="match status" value="2"/>
</dbReference>
<dbReference type="PROSITE" id="PS50055">
    <property type="entry name" value="TYR_PHOSPHATASE_PTP"/>
    <property type="match status" value="2"/>
</dbReference>
<gene>
    <name type="primary">PTPRE</name>
</gene>
<organism>
    <name type="scientific">Homo sapiens</name>
    <name type="common">Human</name>
    <dbReference type="NCBI Taxonomy" id="9606"/>
    <lineage>
        <taxon>Eukaryota</taxon>
        <taxon>Metazoa</taxon>
        <taxon>Chordata</taxon>
        <taxon>Craniata</taxon>
        <taxon>Vertebrata</taxon>
        <taxon>Euteleostomi</taxon>
        <taxon>Mammalia</taxon>
        <taxon>Eutheria</taxon>
        <taxon>Euarchontoglires</taxon>
        <taxon>Primates</taxon>
        <taxon>Haplorrhini</taxon>
        <taxon>Catarrhini</taxon>
        <taxon>Hominidae</taxon>
        <taxon>Homo</taxon>
    </lineage>
</organism>
<proteinExistence type="evidence at protein level"/>
<accession>P23469</accession>
<accession>Q13345</accession>
<accession>Q5VWH3</accession>
<accession>Q5VWH4</accession>
<accession>Q96KQ6</accession>